<comment type="function">
    <text evidence="1">May regulate the intracellular trafficking of RAN. Promotes guanine nucleotide release from RAN and inhibits binding of new GTP by preventing the binding of the RAN guanine nucleotide exchange factor RCC1. Regulates the levels of GTP-bound RAN in the nucleus, and thereby plays a role in the regulation of RAN-dependent mitotic spindle dynamics. Enhances the expression of SCN5A at the cell membrane in cardiomyocytes.</text>
</comment>
<comment type="subunit">
    <text evidence="1 2">Monomer. Interacts with RAN, both RAN-GTP and RAN-GDP. Competes with RCC1 for a common binding site on RAN and thereby inhibits RCC1-mediated nucleotide exchange (By similarity). Forms a complex with RAN-GTP and RANBP1 (By similarity). Interacts with the cytoplasmic loop 2 of SCN5A (By similarity).</text>
</comment>
<comment type="subcellular location">
    <subcellularLocation>
        <location evidence="1">Nucleus</location>
    </subcellularLocation>
    <subcellularLocation>
        <location evidence="1">Cytoplasm</location>
        <location evidence="1">Perinuclear region</location>
    </subcellularLocation>
    <subcellularLocation>
        <location evidence="1">Cytoplasm</location>
    </subcellularLocation>
    <subcellularLocation>
        <location evidence="1">Cell membrane</location>
        <topology evidence="1">Peripheral membrane protein</topology>
        <orientation evidence="1">Cytoplasmic side</orientation>
    </subcellularLocation>
    <text evidence="1">May shuttle between the nucleus and cytoplasm.</text>
</comment>
<comment type="similarity">
    <text evidence="3">Belongs to the MOG1 family.</text>
</comment>
<sequence length="186" mass="20680">MEPTRDNPLFGGAFSATLPPGAIDVSDLRPVPDHQEVFCHRVTDQSLIVELLELQAHVQGEEAARYHFEDVGGVQEARAVQVETVQPLVLEKLALRGCCQEAWILSGQQQVAKENQQVAKYVTLHQALLRLPQYQTDLLLTFNQPPPENRSSLGPENLSIPPWSLGDFEQLVTSLTLHDPNIFGPE</sequence>
<proteinExistence type="evidence at transcript level"/>
<name>MOG1_BOVIN</name>
<feature type="chain" id="PRO_0000330635" description="Ran guanine nucleotide release factor">
    <location>
        <begin position="1"/>
        <end position="186"/>
    </location>
</feature>
<feature type="region of interest" description="Interaction with RAN" evidence="1">
    <location>
        <begin position="27"/>
        <end position="70"/>
    </location>
</feature>
<evidence type="ECO:0000250" key="1">
    <source>
        <dbReference type="UniProtKB" id="Q9HD47"/>
    </source>
</evidence>
<evidence type="ECO:0000250" key="2">
    <source>
        <dbReference type="UniProtKB" id="Q9JIB0"/>
    </source>
</evidence>
<evidence type="ECO:0000305" key="3"/>
<reference key="1">
    <citation type="submission" date="2005-10" db="EMBL/GenBank/DDBJ databases">
        <authorList>
            <consortium name="NIH - Mammalian Gene Collection (MGC) project"/>
        </authorList>
    </citation>
    <scope>NUCLEOTIDE SEQUENCE [LARGE SCALE MRNA]</scope>
    <source>
        <strain>Crossbred X Angus</strain>
        <tissue>Liver</tissue>
    </source>
</reference>
<organism>
    <name type="scientific">Bos taurus</name>
    <name type="common">Bovine</name>
    <dbReference type="NCBI Taxonomy" id="9913"/>
    <lineage>
        <taxon>Eukaryota</taxon>
        <taxon>Metazoa</taxon>
        <taxon>Chordata</taxon>
        <taxon>Craniata</taxon>
        <taxon>Vertebrata</taxon>
        <taxon>Euteleostomi</taxon>
        <taxon>Mammalia</taxon>
        <taxon>Eutheria</taxon>
        <taxon>Laurasiatheria</taxon>
        <taxon>Artiodactyla</taxon>
        <taxon>Ruminantia</taxon>
        <taxon>Pecora</taxon>
        <taxon>Bovidae</taxon>
        <taxon>Bovinae</taxon>
        <taxon>Bos</taxon>
    </lineage>
</organism>
<gene>
    <name type="primary">RANGRF</name>
    <name type="synonym">MOG1</name>
    <name type="synonym">RANGNRF</name>
</gene>
<accession>Q32PE2</accession>
<keyword id="KW-1003">Cell membrane</keyword>
<keyword id="KW-0963">Cytoplasm</keyword>
<keyword id="KW-0344">Guanine-nucleotide releasing factor</keyword>
<keyword id="KW-0472">Membrane</keyword>
<keyword id="KW-0539">Nucleus</keyword>
<keyword id="KW-0653">Protein transport</keyword>
<keyword id="KW-1185">Reference proteome</keyword>
<keyword id="KW-0813">Transport</keyword>
<protein>
    <recommendedName>
        <fullName>Ran guanine nucleotide release factor</fullName>
        <shortName>RanGNRF</shortName>
    </recommendedName>
    <alternativeName>
        <fullName>Ran-binding protein MOG1</fullName>
    </alternativeName>
</protein>
<dbReference type="EMBL" id="BC108151">
    <property type="protein sequence ID" value="AAI08152.1"/>
    <property type="molecule type" value="mRNA"/>
</dbReference>
<dbReference type="RefSeq" id="NP_001032537.1">
    <property type="nucleotide sequence ID" value="NM_001037460.2"/>
</dbReference>
<dbReference type="SMR" id="Q32PE2"/>
<dbReference type="FunCoup" id="Q32PE2">
    <property type="interactions" value="1107"/>
</dbReference>
<dbReference type="STRING" id="9913.ENSBTAP00000025038"/>
<dbReference type="PaxDb" id="9913-ENSBTAP00000025038"/>
<dbReference type="GeneID" id="512506"/>
<dbReference type="KEGG" id="bta:512506"/>
<dbReference type="CTD" id="29098"/>
<dbReference type="eggNOG" id="KOG3329">
    <property type="taxonomic scope" value="Eukaryota"/>
</dbReference>
<dbReference type="InParanoid" id="Q32PE2"/>
<dbReference type="OrthoDB" id="10255285at2759"/>
<dbReference type="Proteomes" id="UP000009136">
    <property type="component" value="Unplaced"/>
</dbReference>
<dbReference type="GO" id="GO:0005634">
    <property type="term" value="C:nucleus"/>
    <property type="evidence" value="ECO:0000318"/>
    <property type="project" value="GO_Central"/>
</dbReference>
<dbReference type="GO" id="GO:0048471">
    <property type="term" value="C:perinuclear region of cytoplasm"/>
    <property type="evidence" value="ECO:0007669"/>
    <property type="project" value="UniProtKB-SubCell"/>
</dbReference>
<dbReference type="GO" id="GO:0005886">
    <property type="term" value="C:plasma membrane"/>
    <property type="evidence" value="ECO:0007669"/>
    <property type="project" value="UniProtKB-SubCell"/>
</dbReference>
<dbReference type="GO" id="GO:0005085">
    <property type="term" value="F:guanyl-nucleotide exchange factor activity"/>
    <property type="evidence" value="ECO:0000318"/>
    <property type="project" value="GO_Central"/>
</dbReference>
<dbReference type="GO" id="GO:0031267">
    <property type="term" value="F:small GTPase binding"/>
    <property type="evidence" value="ECO:0000318"/>
    <property type="project" value="GO_Central"/>
</dbReference>
<dbReference type="GO" id="GO:0017080">
    <property type="term" value="F:sodium channel regulator activity"/>
    <property type="evidence" value="ECO:0000318"/>
    <property type="project" value="GO_Central"/>
</dbReference>
<dbReference type="GO" id="GO:0044325">
    <property type="term" value="F:transmembrane transporter binding"/>
    <property type="evidence" value="ECO:0000318"/>
    <property type="project" value="GO_Central"/>
</dbReference>
<dbReference type="GO" id="GO:0060047">
    <property type="term" value="P:heart contraction"/>
    <property type="evidence" value="ECO:0000318"/>
    <property type="project" value="GO_Central"/>
</dbReference>
<dbReference type="GO" id="GO:0015031">
    <property type="term" value="P:protein transport"/>
    <property type="evidence" value="ECO:0007669"/>
    <property type="project" value="UniProtKB-KW"/>
</dbReference>
<dbReference type="GO" id="GO:1900825">
    <property type="term" value="P:regulation of membrane depolarization during cardiac muscle cell action potential"/>
    <property type="evidence" value="ECO:0000318"/>
    <property type="project" value="GO_Central"/>
</dbReference>
<dbReference type="CDD" id="cd00224">
    <property type="entry name" value="Mog1"/>
    <property type="match status" value="1"/>
</dbReference>
<dbReference type="FunFam" id="3.40.1000.10:FF:000004">
    <property type="entry name" value="Probable ran guanine nucleotide release factor"/>
    <property type="match status" value="1"/>
</dbReference>
<dbReference type="Gene3D" id="3.40.1000.10">
    <property type="entry name" value="Mog1/PsbP, alpha/beta/alpha sandwich"/>
    <property type="match status" value="1"/>
</dbReference>
<dbReference type="InterPro" id="IPR007681">
    <property type="entry name" value="Mog1"/>
</dbReference>
<dbReference type="InterPro" id="IPR016123">
    <property type="entry name" value="Mog1/PsbP_a/b/a-sand"/>
</dbReference>
<dbReference type="PANTHER" id="PTHR15837">
    <property type="entry name" value="RAN GUANINE NUCLEOTIDE RELEASE FACTOR"/>
    <property type="match status" value="1"/>
</dbReference>
<dbReference type="PANTHER" id="PTHR15837:SF0">
    <property type="entry name" value="RAN GUANINE NUCLEOTIDE RELEASE FACTOR"/>
    <property type="match status" value="1"/>
</dbReference>
<dbReference type="Pfam" id="PF04603">
    <property type="entry name" value="Mog1"/>
    <property type="match status" value="1"/>
</dbReference>
<dbReference type="SUPFAM" id="SSF55724">
    <property type="entry name" value="Mog1p/PsbP-like"/>
    <property type="match status" value="1"/>
</dbReference>